<keyword id="KW-1185">Reference proteome</keyword>
<keyword id="KW-0678">Repressor</keyword>
<keyword id="KW-0346">Stress response</keyword>
<keyword id="KW-0804">Transcription</keyword>
<keyword id="KW-0805">Transcription regulation</keyword>
<feature type="chain" id="PRO_0000182483" description="Heat-inducible transcription repressor HrcA">
    <location>
        <begin position="1"/>
        <end position="266"/>
    </location>
</feature>
<sequence length="266" mass="30795">MLRRIKVGSNLNKKESLLDAFVKTYLQILEPISSKRLKELADLKISCATIRNYFQILSKEGMLYQAHSSGARLPTFKAFENYWQKSLRFETLKVNEKRLKSASENFGLFTLLKKPSLERLERVIECEKRFLILDFLAFSCALGYSVKMEKFLLELVGRSVKEVRSIAASFNALSLARQLERLEYSNTQITRFNLMGLKTLLNSPLFFDILGGKVLERLSKGLHFIEPDCMLVTRPVEFQNKRMQLLCVGKLECDYEGFFQTISEEE</sequence>
<gene>
    <name evidence="1" type="primary">hrcA</name>
    <name type="ordered locus">HP_0111</name>
</gene>
<dbReference type="EMBL" id="AE000511">
    <property type="protein sequence ID" value="AAD07182.1"/>
    <property type="status" value="ALT_INIT"/>
    <property type="molecule type" value="Genomic_DNA"/>
</dbReference>
<dbReference type="PIR" id="G64533">
    <property type="entry name" value="G64533"/>
</dbReference>
<dbReference type="RefSeq" id="NP_206911.1">
    <property type="nucleotide sequence ID" value="NC_000915.1"/>
</dbReference>
<dbReference type="SMR" id="O24933"/>
<dbReference type="IntAct" id="O24933">
    <property type="interactions" value="1"/>
</dbReference>
<dbReference type="MINT" id="O24933"/>
<dbReference type="STRING" id="85962.HP_0111"/>
<dbReference type="PaxDb" id="85962-C694_00550"/>
<dbReference type="EnsemblBacteria" id="AAD07182">
    <property type="protein sequence ID" value="AAD07182"/>
    <property type="gene ID" value="HP_0111"/>
</dbReference>
<dbReference type="KEGG" id="hpy:HP_0111"/>
<dbReference type="PATRIC" id="fig|85962.8.peg.118"/>
<dbReference type="eggNOG" id="COG1420">
    <property type="taxonomic scope" value="Bacteria"/>
</dbReference>
<dbReference type="InParanoid" id="O24933"/>
<dbReference type="OrthoDB" id="9783139at2"/>
<dbReference type="Proteomes" id="UP000000429">
    <property type="component" value="Chromosome"/>
</dbReference>
<dbReference type="GO" id="GO:0003677">
    <property type="term" value="F:DNA binding"/>
    <property type="evidence" value="ECO:0007669"/>
    <property type="project" value="InterPro"/>
</dbReference>
<dbReference type="GO" id="GO:0045892">
    <property type="term" value="P:negative regulation of DNA-templated transcription"/>
    <property type="evidence" value="ECO:0000318"/>
    <property type="project" value="GO_Central"/>
</dbReference>
<dbReference type="FunFam" id="1.10.10.10:FF:000785">
    <property type="entry name" value="Heat-inducible transcription repressor HrcA"/>
    <property type="match status" value="1"/>
</dbReference>
<dbReference type="Gene3D" id="1.10.10.10">
    <property type="entry name" value="Winged helix-like DNA-binding domain superfamily/Winged helix DNA-binding domain"/>
    <property type="match status" value="1"/>
</dbReference>
<dbReference type="HAMAP" id="MF_00081">
    <property type="entry name" value="HrcA"/>
    <property type="match status" value="1"/>
</dbReference>
<dbReference type="InterPro" id="IPR002571">
    <property type="entry name" value="HrcA"/>
</dbReference>
<dbReference type="InterPro" id="IPR036388">
    <property type="entry name" value="WH-like_DNA-bd_sf"/>
</dbReference>
<dbReference type="InterPro" id="IPR036390">
    <property type="entry name" value="WH_DNA-bd_sf"/>
</dbReference>
<dbReference type="NCBIfam" id="NF003033">
    <property type="entry name" value="PRK03911.1"/>
    <property type="match status" value="1"/>
</dbReference>
<dbReference type="PANTHER" id="PTHR34824">
    <property type="entry name" value="HEAT-INDUCIBLE TRANSCRIPTION REPRESSOR HRCA"/>
    <property type="match status" value="1"/>
</dbReference>
<dbReference type="PANTHER" id="PTHR34824:SF1">
    <property type="entry name" value="HEAT-INDUCIBLE TRANSCRIPTION REPRESSOR HRCA"/>
    <property type="match status" value="1"/>
</dbReference>
<dbReference type="SUPFAM" id="SSF46785">
    <property type="entry name" value="Winged helix' DNA-binding domain"/>
    <property type="match status" value="1"/>
</dbReference>
<evidence type="ECO:0000255" key="1">
    <source>
        <dbReference type="HAMAP-Rule" id="MF_00081"/>
    </source>
</evidence>
<evidence type="ECO:0000305" key="2"/>
<protein>
    <recommendedName>
        <fullName evidence="1">Heat-inducible transcription repressor HrcA</fullName>
    </recommendedName>
</protein>
<accession>O24933</accession>
<proteinExistence type="inferred from homology"/>
<name>HRCA_HELPY</name>
<comment type="function">
    <text evidence="1">Negative regulator of class I heat shock genes (grpE-dnaK-dnaJ and groELS operons). Prevents heat-shock induction of these operons.</text>
</comment>
<comment type="similarity">
    <text evidence="1">Belongs to the HrcA family.</text>
</comment>
<comment type="sequence caution" evidence="2">
    <conflict type="erroneous initiation">
        <sequence resource="EMBL-CDS" id="AAD07182"/>
    </conflict>
</comment>
<reference key="1">
    <citation type="journal article" date="1997" name="Nature">
        <title>The complete genome sequence of the gastric pathogen Helicobacter pylori.</title>
        <authorList>
            <person name="Tomb J.-F."/>
            <person name="White O."/>
            <person name="Kerlavage A.R."/>
            <person name="Clayton R.A."/>
            <person name="Sutton G.G."/>
            <person name="Fleischmann R.D."/>
            <person name="Ketchum K.A."/>
            <person name="Klenk H.-P."/>
            <person name="Gill S.R."/>
            <person name="Dougherty B.A."/>
            <person name="Nelson K.E."/>
            <person name="Quackenbush J."/>
            <person name="Zhou L."/>
            <person name="Kirkness E.F."/>
            <person name="Peterson S.N."/>
            <person name="Loftus B.J."/>
            <person name="Richardson D.L."/>
            <person name="Dodson R.J."/>
            <person name="Khalak H.G."/>
            <person name="Glodek A."/>
            <person name="McKenney K."/>
            <person name="FitzGerald L.M."/>
            <person name="Lee N."/>
            <person name="Adams M.D."/>
            <person name="Hickey E.K."/>
            <person name="Berg D.E."/>
            <person name="Gocayne J.D."/>
            <person name="Utterback T.R."/>
            <person name="Peterson J.D."/>
            <person name="Kelley J.M."/>
            <person name="Cotton M.D."/>
            <person name="Weidman J.F."/>
            <person name="Fujii C."/>
            <person name="Bowman C."/>
            <person name="Watthey L."/>
            <person name="Wallin E."/>
            <person name="Hayes W.S."/>
            <person name="Borodovsky M."/>
            <person name="Karp P.D."/>
            <person name="Smith H.O."/>
            <person name="Fraser C.M."/>
            <person name="Venter J.C."/>
        </authorList>
    </citation>
    <scope>NUCLEOTIDE SEQUENCE [LARGE SCALE GENOMIC DNA]</scope>
    <source>
        <strain>ATCC 700392 / 26695</strain>
    </source>
</reference>
<organism>
    <name type="scientific">Helicobacter pylori (strain ATCC 700392 / 26695)</name>
    <name type="common">Campylobacter pylori</name>
    <dbReference type="NCBI Taxonomy" id="85962"/>
    <lineage>
        <taxon>Bacteria</taxon>
        <taxon>Pseudomonadati</taxon>
        <taxon>Campylobacterota</taxon>
        <taxon>Epsilonproteobacteria</taxon>
        <taxon>Campylobacterales</taxon>
        <taxon>Helicobacteraceae</taxon>
        <taxon>Helicobacter</taxon>
    </lineage>
</organism>